<comment type="function">
    <text evidence="1">Stimulates the transcription of various genes by recognizing and binding to a CCAAT motif in promoters.</text>
</comment>
<comment type="subunit">
    <text evidence="1">Heterotrimeric transcription factor composed of three components, NF-YA, NF-YB and NF-YC. NF-YB and NF-YC must interact and dimerize for NF-YA association and DNA binding (By similarity).</text>
</comment>
<comment type="interaction">
    <interactant intactId="EBI-15191571">
        <id>Q4PSE2</id>
    </interactant>
    <interactant intactId="EBI-4435051">
        <id>Q9LU68</id>
        <label>CIA2</label>
    </interactant>
    <organismsDiffer>false</organismsDiffer>
    <experiments>3</experiments>
</comment>
<comment type="interaction">
    <interactant intactId="EBI-15191571">
        <id>Q4PSE2</id>
    </interactant>
    <interactant intactId="EBI-15191913">
        <id>O23379</id>
        <label>COL11</label>
    </interactant>
    <organismsDiffer>false</organismsDiffer>
    <experiments>3</experiments>
</comment>
<comment type="interaction">
    <interactant intactId="EBI-15191571">
        <id>Q4PSE2</id>
    </interactant>
    <interactant intactId="EBI-15192317">
        <id>Q9LJ44</id>
        <label>COL12</label>
    </interactant>
    <organismsDiffer>false</organismsDiffer>
    <experiments>4</experiments>
</comment>
<comment type="interaction">
    <interactant intactId="EBI-15191571">
        <id>Q4PSE2</id>
    </interactant>
    <interactant intactId="EBI-15191569">
        <id>O82256</id>
        <label>COL13</label>
    </interactant>
    <organismsDiffer>false</organismsDiffer>
    <experiments>3</experiments>
</comment>
<comment type="interaction">
    <interactant intactId="EBI-15191571">
        <id>Q4PSE2</id>
    </interactant>
    <interactant intactId="EBI-15192033">
        <id>O22800-2</id>
        <label>COL14</label>
    </interactant>
    <organismsDiffer>false</organismsDiffer>
    <experiments>3</experiments>
</comment>
<comment type="interaction">
    <interactant intactId="EBI-15191571">
        <id>Q4PSE2</id>
    </interactant>
    <interactant intactId="EBI-2465998">
        <id>Q9C7E8</id>
        <label>COL15</label>
    </interactant>
    <organismsDiffer>false</organismsDiffer>
    <experiments>3</experiments>
</comment>
<comment type="interaction">
    <interactant intactId="EBI-15191571">
        <id>Q4PSE2</id>
    </interactant>
    <interactant intactId="EBI-15192471">
        <id>Q8RWD0</id>
        <label>COL16</label>
    </interactant>
    <organismsDiffer>false</organismsDiffer>
    <experiments>3</experiments>
</comment>
<comment type="interaction">
    <interactant intactId="EBI-15191571">
        <id>Q4PSE2</id>
    </interactant>
    <interactant intactId="EBI-4425260">
        <id>Q96502</id>
        <label>COL2</label>
    </interactant>
    <organismsDiffer>false</organismsDiffer>
    <experiments>3</experiments>
</comment>
<comment type="interaction">
    <interactant intactId="EBI-15191571">
        <id>Q4PSE2</id>
    </interactant>
    <interactant intactId="EBI-15192397">
        <id>Q9M9B3</id>
        <label>COL8</label>
    </interactant>
    <organismsDiffer>false</organismsDiffer>
    <experiments>3</experiments>
</comment>
<comment type="interaction">
    <interactant intactId="EBI-15191571">
        <id>Q4PSE2</id>
    </interactant>
    <interactant intactId="EBI-5849461">
        <id>P94077</id>
        <label>LSD1</label>
    </interactant>
    <organismsDiffer>false</organismsDiffer>
    <experiments>4</experiments>
</comment>
<comment type="interaction">
    <interactant intactId="EBI-15191571">
        <id>Q4PSE2</id>
    </interactant>
    <interactant intactId="EBI-15191663">
        <id>Q5Q0A4</id>
        <label>MYC6.9</label>
    </interactant>
    <organismsDiffer>false</organismsDiffer>
    <experiments>3</experiments>
</comment>
<comment type="interaction">
    <interactant intactId="EBI-15191571">
        <id>Q4PSE2</id>
    </interactant>
    <interactant intactId="EBI-2126009">
        <id>Q9SLG0</id>
        <label>NFYB1</label>
    </interactant>
    <organismsDiffer>false</organismsDiffer>
    <experiments>3</experiments>
</comment>
<comment type="interaction">
    <interactant intactId="EBI-15191571">
        <id>Q4PSE2</id>
    </interactant>
    <interactant intactId="EBI-2475824">
        <id>Q67XJ2</id>
        <label>NFYB10</label>
    </interactant>
    <organismsDiffer>false</organismsDiffer>
    <experiments>3</experiments>
</comment>
<comment type="interaction">
    <interactant intactId="EBI-15191571">
        <id>Q4PSE2</id>
    </interactant>
    <interactant intactId="EBI-15192505">
        <id>Q9FGJ3</id>
        <label>NFYB2</label>
    </interactant>
    <organismsDiffer>false</organismsDiffer>
    <experiments>5</experiments>
</comment>
<comment type="interaction">
    <interactant intactId="EBI-15191571">
        <id>Q4PSE2</id>
    </interactant>
    <interactant intactId="EBI-4452064">
        <id>O23310</id>
        <label>NFYB3</label>
    </interactant>
    <organismsDiffer>false</organismsDiffer>
    <experiments>3</experiments>
</comment>
<comment type="interaction">
    <interactant intactId="EBI-15191571">
        <id>Q4PSE2</id>
    </interactant>
    <interactant intactId="EBI-1751677">
        <id>O04027</id>
        <label>NFYB4</label>
    </interactant>
    <organismsDiffer>false</organismsDiffer>
    <experiments>3</experiments>
</comment>
<comment type="interaction">
    <interactant intactId="EBI-15191571">
        <id>Q4PSE2</id>
    </interactant>
    <interactant intactId="EBI-2475759">
        <id>O82248</id>
        <label>NFYB5</label>
    </interactant>
    <organismsDiffer>false</organismsDiffer>
    <experiments>3</experiments>
</comment>
<comment type="interaction">
    <interactant intactId="EBI-15191571">
        <id>Q4PSE2</id>
    </interactant>
    <interactant intactId="EBI-15191739">
        <id>Q84W66-2</id>
        <label>NFYB6</label>
    </interactant>
    <organismsDiffer>false</organismsDiffer>
    <experiments>3</experiments>
</comment>
<comment type="interaction">
    <interactant intactId="EBI-15191571">
        <id>Q4PSE2</id>
    </interactant>
    <interactant intactId="EBI-4459822">
        <id>Q9SIT9</id>
        <label>NFYB7</label>
    </interactant>
    <organismsDiffer>false</organismsDiffer>
    <experiments>3</experiments>
</comment>
<comment type="interaction">
    <interactant intactId="EBI-15191571">
        <id>Q4PSE2</id>
    </interactant>
    <interactant intactId="EBI-15192579">
        <id>Q8VYK4</id>
        <label>NFYB8</label>
    </interactant>
    <organismsDiffer>false</organismsDiffer>
    <experiments>3</experiments>
</comment>
<comment type="interaction">
    <interactant intactId="EBI-15191571">
        <id>Q4PSE2</id>
    </interactant>
    <interactant intactId="EBI-3133327">
        <id>O82277</id>
        <label>TCP10</label>
    </interactant>
    <organismsDiffer>false</organismsDiffer>
    <experiments>3</experiments>
</comment>
<comment type="interaction">
    <interactant intactId="EBI-15191571">
        <id>Q4PSE2</id>
    </interactant>
    <interactant intactId="EBI-4424877">
        <id>Q9S7W5</id>
        <label>TCP13</label>
    </interactant>
    <organismsDiffer>false</organismsDiffer>
    <experiments>3</experiments>
</comment>
<comment type="interaction">
    <interactant intactId="EBI-15191571">
        <id>Q4PSE2</id>
    </interactant>
    <interactant intactId="EBI-4424563">
        <id>Q93Z00</id>
        <label>TCP14</label>
    </interactant>
    <organismsDiffer>false</organismsDiffer>
    <experiments>3</experiments>
</comment>
<comment type="interaction">
    <interactant intactId="EBI-15191571">
        <id>Q4PSE2</id>
    </interactant>
    <interactant intactId="EBI-4426144">
        <id>Q9C9L2</id>
        <label>TCP15</label>
    </interactant>
    <organismsDiffer>false</organismsDiffer>
    <experiments>4</experiments>
</comment>
<comment type="interaction">
    <interactant intactId="EBI-15191571">
        <id>Q4PSE2</id>
    </interactant>
    <interactant intactId="EBI-15192677">
        <id>Q9FMX2</id>
        <label>TCP7</label>
    </interactant>
    <organismsDiffer>false</organismsDiffer>
    <experiments>3</experiments>
</comment>
<comment type="interaction">
    <interactant intactId="EBI-15191571">
        <id>Q4PSE2</id>
    </interactant>
    <interactant intactId="EBI-1806244">
        <id>O64722</id>
        <label>ZHD3</label>
    </interactant>
    <organismsDiffer>false</organismsDiffer>
    <experiments>3</experiments>
</comment>
<comment type="subcellular location">
    <subcellularLocation>
        <location evidence="1">Nucleus</location>
    </subcellularLocation>
</comment>
<comment type="tissue specificity">
    <text evidence="3">Expressed in flowers and siliques.</text>
</comment>
<comment type="similarity">
    <text evidence="4">Belongs to the NFYC/HAP5 subunit family.</text>
</comment>
<organism>
    <name type="scientific">Arabidopsis thaliana</name>
    <name type="common">Mouse-ear cress</name>
    <dbReference type="NCBI Taxonomy" id="3702"/>
    <lineage>
        <taxon>Eukaryota</taxon>
        <taxon>Viridiplantae</taxon>
        <taxon>Streptophyta</taxon>
        <taxon>Embryophyta</taxon>
        <taxon>Tracheophyta</taxon>
        <taxon>Spermatophyta</taxon>
        <taxon>Magnoliopsida</taxon>
        <taxon>eudicotyledons</taxon>
        <taxon>Gunneridae</taxon>
        <taxon>Pentapetalae</taxon>
        <taxon>rosids</taxon>
        <taxon>malvids</taxon>
        <taxon>Brassicales</taxon>
        <taxon>Brassicaceae</taxon>
        <taxon>Camelineae</taxon>
        <taxon>Arabidopsis</taxon>
    </lineage>
</organism>
<dbReference type="EMBL" id="AC007399">
    <property type="status" value="NOT_ANNOTATED_CDS"/>
    <property type="molecule type" value="Genomic_DNA"/>
</dbReference>
<dbReference type="EMBL" id="AC007627">
    <property type="status" value="NOT_ANNOTATED_CDS"/>
    <property type="molecule type" value="Genomic_DNA"/>
</dbReference>
<dbReference type="EMBL" id="CP002688">
    <property type="protein sequence ID" value="AED93743.1"/>
    <property type="molecule type" value="Genomic_DNA"/>
</dbReference>
<dbReference type="EMBL" id="DQ056694">
    <property type="protein sequence ID" value="AAY78840.1"/>
    <property type="molecule type" value="mRNA"/>
</dbReference>
<dbReference type="RefSeq" id="NP_198143.1">
    <property type="nucleotide sequence ID" value="NM_122673.2"/>
</dbReference>
<dbReference type="SMR" id="Q4PSE2"/>
<dbReference type="BioGRID" id="18131">
    <property type="interactions" value="75"/>
</dbReference>
<dbReference type="FunCoup" id="Q4PSE2">
    <property type="interactions" value="149"/>
</dbReference>
<dbReference type="IntAct" id="Q4PSE2">
    <property type="interactions" value="69"/>
</dbReference>
<dbReference type="STRING" id="3702.Q4PSE2"/>
<dbReference type="PaxDb" id="3702-AT5G27910.1"/>
<dbReference type="EnsemblPlants" id="AT5G27910.1">
    <property type="protein sequence ID" value="AT5G27910.1"/>
    <property type="gene ID" value="AT5G27910"/>
</dbReference>
<dbReference type="GeneID" id="832857"/>
<dbReference type="Gramene" id="AT5G27910.1">
    <property type="protein sequence ID" value="AT5G27910.1"/>
    <property type="gene ID" value="AT5G27910"/>
</dbReference>
<dbReference type="KEGG" id="ath:AT5G27910"/>
<dbReference type="Araport" id="AT5G27910"/>
<dbReference type="TAIR" id="AT5G27910">
    <property type="gene designation" value="NF-YC8"/>
</dbReference>
<dbReference type="eggNOG" id="KOG1657">
    <property type="taxonomic scope" value="Eukaryota"/>
</dbReference>
<dbReference type="HOGENOM" id="CLU_045277_0_2_1"/>
<dbReference type="InParanoid" id="Q4PSE2"/>
<dbReference type="OMA" id="IGTPVCC"/>
<dbReference type="PhylomeDB" id="Q4PSE2"/>
<dbReference type="PRO" id="PR:Q4PSE2"/>
<dbReference type="Proteomes" id="UP000006548">
    <property type="component" value="Chromosome 5"/>
</dbReference>
<dbReference type="ExpressionAtlas" id="Q4PSE2">
    <property type="expression patterns" value="baseline and differential"/>
</dbReference>
<dbReference type="GO" id="GO:0005634">
    <property type="term" value="C:nucleus"/>
    <property type="evidence" value="ECO:0007669"/>
    <property type="project" value="UniProtKB-SubCell"/>
</dbReference>
<dbReference type="GO" id="GO:0003677">
    <property type="term" value="F:DNA binding"/>
    <property type="evidence" value="ECO:0007669"/>
    <property type="project" value="UniProtKB-KW"/>
</dbReference>
<dbReference type="GO" id="GO:0003700">
    <property type="term" value="F:DNA-binding transcription factor activity"/>
    <property type="evidence" value="ECO:0000250"/>
    <property type="project" value="TAIR"/>
</dbReference>
<dbReference type="GO" id="GO:0046982">
    <property type="term" value="F:protein heterodimerization activity"/>
    <property type="evidence" value="ECO:0007669"/>
    <property type="project" value="InterPro"/>
</dbReference>
<dbReference type="CDD" id="cd22908">
    <property type="entry name" value="HFD_NFYC-like"/>
    <property type="match status" value="1"/>
</dbReference>
<dbReference type="FunFam" id="1.10.20.10:FF:000062">
    <property type="entry name" value="Nuclear transcription factor Y subunit C"/>
    <property type="match status" value="1"/>
</dbReference>
<dbReference type="Gene3D" id="1.10.20.10">
    <property type="entry name" value="Histone, subunit A"/>
    <property type="match status" value="1"/>
</dbReference>
<dbReference type="InterPro" id="IPR003958">
    <property type="entry name" value="CBFA_NFYB_domain"/>
</dbReference>
<dbReference type="InterPro" id="IPR009072">
    <property type="entry name" value="Histone-fold"/>
</dbReference>
<dbReference type="InterPro" id="IPR050568">
    <property type="entry name" value="Transcr_DNA_Rep_Reg"/>
</dbReference>
<dbReference type="PANTHER" id="PTHR10252">
    <property type="entry name" value="HISTONE-LIKE TRANSCRIPTION FACTOR CCAAT-RELATED"/>
    <property type="match status" value="1"/>
</dbReference>
<dbReference type="PANTHER" id="PTHR10252:SF133">
    <property type="entry name" value="NUCLEAR TRANSCRIPTION FACTOR Y SUBUNIT C-1-RELATED"/>
    <property type="match status" value="1"/>
</dbReference>
<dbReference type="Pfam" id="PF00808">
    <property type="entry name" value="CBFD_NFYB_HMF"/>
    <property type="match status" value="1"/>
</dbReference>
<dbReference type="SUPFAM" id="SSF47113">
    <property type="entry name" value="Histone-fold"/>
    <property type="match status" value="1"/>
</dbReference>
<proteinExistence type="evidence at protein level"/>
<accession>Q4PSE2</accession>
<feature type="chain" id="PRO_0000218257" description="Nuclear transcription factor Y subunit C-8">
    <location>
        <begin position="1"/>
        <end position="187"/>
    </location>
</feature>
<feature type="region of interest" description="Disordered" evidence="2">
    <location>
        <begin position="163"/>
        <end position="187"/>
    </location>
</feature>
<feature type="compositionally biased region" description="Basic and acidic residues" evidence="2">
    <location>
        <begin position="177"/>
        <end position="187"/>
    </location>
</feature>
<gene>
    <name type="primary">NFYC8</name>
    <name type="ordered locus">At5g27910</name>
    <name type="ORF">F14I23.70</name>
    <name type="ORF">F15F15.1</name>
</gene>
<sequence>MENNNGNNQLPPKGNEQLKSFWSKEMEGNLDFKNHDLPITRIKKIMKYDPDVTMIASEAPILLSKACEMFIMDLTMRSWLHAQESKRVTLQKSNVDAAVAQTVIFDFLLDDDIEVKRESVAAAADPVAMPPIDDGELPPGMVIGTPVCCSLGIHQPQPQMQAWPGAWTSVSGEEEEARGKKGGDDGN</sequence>
<evidence type="ECO:0000250" key="1"/>
<evidence type="ECO:0000256" key="2">
    <source>
        <dbReference type="SAM" id="MobiDB-lite"/>
    </source>
</evidence>
<evidence type="ECO:0000269" key="3">
    <source>
    </source>
</evidence>
<evidence type="ECO:0000305" key="4"/>
<protein>
    <recommendedName>
        <fullName>Nuclear transcription factor Y subunit C-8</fullName>
        <shortName>AtNF-YC-8</shortName>
    </recommendedName>
</protein>
<name>NFYC8_ARATH</name>
<keyword id="KW-0010">Activator</keyword>
<keyword id="KW-0238">DNA-binding</keyword>
<keyword id="KW-0539">Nucleus</keyword>
<keyword id="KW-1185">Reference proteome</keyword>
<keyword id="KW-0804">Transcription</keyword>
<keyword id="KW-0805">Transcription regulation</keyword>
<reference key="1">
    <citation type="journal article" date="2000" name="Nature">
        <title>Sequence and analysis of chromosome 5 of the plant Arabidopsis thaliana.</title>
        <authorList>
            <person name="Tabata S."/>
            <person name="Kaneko T."/>
            <person name="Nakamura Y."/>
            <person name="Kotani H."/>
            <person name="Kato T."/>
            <person name="Asamizu E."/>
            <person name="Miyajima N."/>
            <person name="Sasamoto S."/>
            <person name="Kimura T."/>
            <person name="Hosouchi T."/>
            <person name="Kawashima K."/>
            <person name="Kohara M."/>
            <person name="Matsumoto M."/>
            <person name="Matsuno A."/>
            <person name="Muraki A."/>
            <person name="Nakayama S."/>
            <person name="Nakazaki N."/>
            <person name="Naruo K."/>
            <person name="Okumura S."/>
            <person name="Shinpo S."/>
            <person name="Takeuchi C."/>
            <person name="Wada T."/>
            <person name="Watanabe A."/>
            <person name="Yamada M."/>
            <person name="Yasuda M."/>
            <person name="Sato S."/>
            <person name="de la Bastide M."/>
            <person name="Huang E."/>
            <person name="Spiegel L."/>
            <person name="Gnoj L."/>
            <person name="O'Shaughnessy A."/>
            <person name="Preston R."/>
            <person name="Habermann K."/>
            <person name="Murray J."/>
            <person name="Johnson D."/>
            <person name="Rohlfing T."/>
            <person name="Nelson J."/>
            <person name="Stoneking T."/>
            <person name="Pepin K."/>
            <person name="Spieth J."/>
            <person name="Sekhon M."/>
            <person name="Armstrong J."/>
            <person name="Becker M."/>
            <person name="Belter E."/>
            <person name="Cordum H."/>
            <person name="Cordes M."/>
            <person name="Courtney L."/>
            <person name="Courtney W."/>
            <person name="Dante M."/>
            <person name="Du H."/>
            <person name="Edwards J."/>
            <person name="Fryman J."/>
            <person name="Haakensen B."/>
            <person name="Lamar E."/>
            <person name="Latreille P."/>
            <person name="Leonard S."/>
            <person name="Meyer R."/>
            <person name="Mulvaney E."/>
            <person name="Ozersky P."/>
            <person name="Riley A."/>
            <person name="Strowmatt C."/>
            <person name="Wagner-McPherson C."/>
            <person name="Wollam A."/>
            <person name="Yoakum M."/>
            <person name="Bell M."/>
            <person name="Dedhia N."/>
            <person name="Parnell L."/>
            <person name="Shah R."/>
            <person name="Rodriguez M."/>
            <person name="Hoon See L."/>
            <person name="Vil D."/>
            <person name="Baker J."/>
            <person name="Kirchoff K."/>
            <person name="Toth K."/>
            <person name="King L."/>
            <person name="Bahret A."/>
            <person name="Miller B."/>
            <person name="Marra M.A."/>
            <person name="Martienssen R."/>
            <person name="McCombie W.R."/>
            <person name="Wilson R.K."/>
            <person name="Murphy G."/>
            <person name="Bancroft I."/>
            <person name="Volckaert G."/>
            <person name="Wambutt R."/>
            <person name="Duesterhoeft A."/>
            <person name="Stiekema W."/>
            <person name="Pohl T."/>
            <person name="Entian K.-D."/>
            <person name="Terryn N."/>
            <person name="Hartley N."/>
            <person name="Bent E."/>
            <person name="Johnson S."/>
            <person name="Langham S.-A."/>
            <person name="McCullagh B."/>
            <person name="Robben J."/>
            <person name="Grymonprez B."/>
            <person name="Zimmermann W."/>
            <person name="Ramsperger U."/>
            <person name="Wedler H."/>
            <person name="Balke K."/>
            <person name="Wedler E."/>
            <person name="Peters S."/>
            <person name="van Staveren M."/>
            <person name="Dirkse W."/>
            <person name="Mooijman P."/>
            <person name="Klein Lankhorst R."/>
            <person name="Weitzenegger T."/>
            <person name="Bothe G."/>
            <person name="Rose M."/>
            <person name="Hauf J."/>
            <person name="Berneiser S."/>
            <person name="Hempel S."/>
            <person name="Feldpausch M."/>
            <person name="Lamberth S."/>
            <person name="Villarroel R."/>
            <person name="Gielen J."/>
            <person name="Ardiles W."/>
            <person name="Bents O."/>
            <person name="Lemcke K."/>
            <person name="Kolesov G."/>
            <person name="Mayer K.F.X."/>
            <person name="Rudd S."/>
            <person name="Schoof H."/>
            <person name="Schueller C."/>
            <person name="Zaccaria P."/>
            <person name="Mewes H.-W."/>
            <person name="Bevan M."/>
            <person name="Fransz P.F."/>
        </authorList>
    </citation>
    <scope>NUCLEOTIDE SEQUENCE [LARGE SCALE GENOMIC DNA]</scope>
    <source>
        <strain>cv. Columbia</strain>
    </source>
</reference>
<reference key="2">
    <citation type="journal article" date="2017" name="Plant J.">
        <title>Araport11: a complete reannotation of the Arabidopsis thaliana reference genome.</title>
        <authorList>
            <person name="Cheng C.Y."/>
            <person name="Krishnakumar V."/>
            <person name="Chan A.P."/>
            <person name="Thibaud-Nissen F."/>
            <person name="Schobel S."/>
            <person name="Town C.D."/>
        </authorList>
    </citation>
    <scope>GENOME REANNOTATION</scope>
    <source>
        <strain>cv. Columbia</strain>
    </source>
</reference>
<reference key="3">
    <citation type="submission" date="2005-05" db="EMBL/GenBank/DDBJ databases">
        <authorList>
            <person name="Underwood B.A."/>
            <person name="Xiao Y.-L."/>
            <person name="Moskal W.A. Jr."/>
            <person name="Monaghan E.L."/>
            <person name="Wang W."/>
            <person name="Redman J.C."/>
            <person name="Wu H.C."/>
            <person name="Utterback T."/>
            <person name="Town C.D."/>
        </authorList>
    </citation>
    <scope>NUCLEOTIDE SEQUENCE [LARGE SCALE MRNA]</scope>
    <source>
        <strain>cv. Columbia</strain>
    </source>
</reference>
<reference key="4">
    <citation type="journal article" date="2001" name="Gene">
        <title>Regulation of the CCAAT-binding NF-Y subunits in Arabidopsis thaliana.</title>
        <authorList>
            <person name="Gusmaroli G."/>
            <person name="Tonelli C."/>
            <person name="Mantovani R."/>
        </authorList>
    </citation>
    <scope>TISSUE SPECIFICITY</scope>
</reference>
<reference key="5">
    <citation type="journal article" date="2002" name="Gene">
        <title>Regulation of novel members of the Arabidopsis thaliana CCAAT-binding nuclear factor Y subunits.</title>
        <authorList>
            <person name="Gusmaroli G."/>
            <person name="Tonelli C."/>
            <person name="Mantovani R."/>
        </authorList>
    </citation>
    <scope>GENE FAMILY</scope>
    <scope>NOMENCLATURE</scope>
</reference>